<accession>A9MVK6</accession>
<dbReference type="EC" id="5.4.2.12" evidence="1"/>
<dbReference type="EMBL" id="CP000886">
    <property type="protein sequence ID" value="ABX69914.1"/>
    <property type="molecule type" value="Genomic_DNA"/>
</dbReference>
<dbReference type="SMR" id="A9MVK6"/>
<dbReference type="KEGG" id="spq:SPAB_04601"/>
<dbReference type="PATRIC" id="fig|1016998.12.peg.4327"/>
<dbReference type="HOGENOM" id="CLU_026099_2_0_6"/>
<dbReference type="BioCyc" id="SENT1016998:SPAB_RS18715-MONOMER"/>
<dbReference type="UniPathway" id="UPA00109">
    <property type="reaction ID" value="UER00186"/>
</dbReference>
<dbReference type="Proteomes" id="UP000008556">
    <property type="component" value="Chromosome"/>
</dbReference>
<dbReference type="GO" id="GO:0005829">
    <property type="term" value="C:cytosol"/>
    <property type="evidence" value="ECO:0007669"/>
    <property type="project" value="TreeGrafter"/>
</dbReference>
<dbReference type="GO" id="GO:0030145">
    <property type="term" value="F:manganese ion binding"/>
    <property type="evidence" value="ECO:0007669"/>
    <property type="project" value="UniProtKB-UniRule"/>
</dbReference>
<dbReference type="GO" id="GO:0004619">
    <property type="term" value="F:phosphoglycerate mutase activity"/>
    <property type="evidence" value="ECO:0007669"/>
    <property type="project" value="UniProtKB-EC"/>
</dbReference>
<dbReference type="GO" id="GO:0006007">
    <property type="term" value="P:glucose catabolic process"/>
    <property type="evidence" value="ECO:0007669"/>
    <property type="project" value="InterPro"/>
</dbReference>
<dbReference type="GO" id="GO:0006096">
    <property type="term" value="P:glycolytic process"/>
    <property type="evidence" value="ECO:0007669"/>
    <property type="project" value="UniProtKB-UniRule"/>
</dbReference>
<dbReference type="CDD" id="cd16010">
    <property type="entry name" value="iPGM"/>
    <property type="match status" value="1"/>
</dbReference>
<dbReference type="FunFam" id="3.40.1450.10:FF:000001">
    <property type="entry name" value="2,3-bisphosphoglycerate-independent phosphoglycerate mutase"/>
    <property type="match status" value="1"/>
</dbReference>
<dbReference type="FunFam" id="3.40.720.10:FF:000001">
    <property type="entry name" value="2,3-bisphosphoglycerate-independent phosphoglycerate mutase"/>
    <property type="match status" value="1"/>
</dbReference>
<dbReference type="Gene3D" id="3.40.720.10">
    <property type="entry name" value="Alkaline Phosphatase, subunit A"/>
    <property type="match status" value="1"/>
</dbReference>
<dbReference type="Gene3D" id="3.40.1450.10">
    <property type="entry name" value="BPG-independent phosphoglycerate mutase, domain B"/>
    <property type="match status" value="1"/>
</dbReference>
<dbReference type="HAMAP" id="MF_01038">
    <property type="entry name" value="GpmI"/>
    <property type="match status" value="1"/>
</dbReference>
<dbReference type="InterPro" id="IPR017850">
    <property type="entry name" value="Alkaline_phosphatase_core_sf"/>
</dbReference>
<dbReference type="InterPro" id="IPR011258">
    <property type="entry name" value="BPG-indep_PGM_N"/>
</dbReference>
<dbReference type="InterPro" id="IPR006124">
    <property type="entry name" value="Metalloenzyme"/>
</dbReference>
<dbReference type="InterPro" id="IPR036646">
    <property type="entry name" value="PGAM_B_sf"/>
</dbReference>
<dbReference type="InterPro" id="IPR005995">
    <property type="entry name" value="Pgm_bpd_ind"/>
</dbReference>
<dbReference type="NCBIfam" id="TIGR01307">
    <property type="entry name" value="pgm_bpd_ind"/>
    <property type="match status" value="1"/>
</dbReference>
<dbReference type="NCBIfam" id="NF003897">
    <property type="entry name" value="PRK05434.1-5"/>
    <property type="match status" value="1"/>
</dbReference>
<dbReference type="PANTHER" id="PTHR31637">
    <property type="entry name" value="2,3-BISPHOSPHOGLYCERATE-INDEPENDENT PHOSPHOGLYCERATE MUTASE"/>
    <property type="match status" value="1"/>
</dbReference>
<dbReference type="PANTHER" id="PTHR31637:SF0">
    <property type="entry name" value="2,3-BISPHOSPHOGLYCERATE-INDEPENDENT PHOSPHOGLYCERATE MUTASE"/>
    <property type="match status" value="1"/>
</dbReference>
<dbReference type="Pfam" id="PF06415">
    <property type="entry name" value="iPGM_N"/>
    <property type="match status" value="1"/>
</dbReference>
<dbReference type="Pfam" id="PF01676">
    <property type="entry name" value="Metalloenzyme"/>
    <property type="match status" value="1"/>
</dbReference>
<dbReference type="PIRSF" id="PIRSF001492">
    <property type="entry name" value="IPGAM"/>
    <property type="match status" value="1"/>
</dbReference>
<dbReference type="SUPFAM" id="SSF64158">
    <property type="entry name" value="2,3-Bisphosphoglycerate-independent phosphoglycerate mutase, substrate-binding domain"/>
    <property type="match status" value="1"/>
</dbReference>
<dbReference type="SUPFAM" id="SSF53649">
    <property type="entry name" value="Alkaline phosphatase-like"/>
    <property type="match status" value="1"/>
</dbReference>
<name>GPMI_SALPB</name>
<comment type="function">
    <text evidence="1">Catalyzes the interconversion of 2-phosphoglycerate and 3-phosphoglycerate.</text>
</comment>
<comment type="catalytic activity">
    <reaction evidence="1">
        <text>(2R)-2-phosphoglycerate = (2R)-3-phosphoglycerate</text>
        <dbReference type="Rhea" id="RHEA:15901"/>
        <dbReference type="ChEBI" id="CHEBI:58272"/>
        <dbReference type="ChEBI" id="CHEBI:58289"/>
        <dbReference type="EC" id="5.4.2.12"/>
    </reaction>
</comment>
<comment type="cofactor">
    <cofactor evidence="1">
        <name>Mn(2+)</name>
        <dbReference type="ChEBI" id="CHEBI:29035"/>
    </cofactor>
    <text evidence="1">Binds 2 manganese ions per subunit.</text>
</comment>
<comment type="pathway">
    <text evidence="1">Carbohydrate degradation; glycolysis; pyruvate from D-glyceraldehyde 3-phosphate: step 3/5.</text>
</comment>
<comment type="subunit">
    <text evidence="1">Monomer.</text>
</comment>
<comment type="similarity">
    <text evidence="1">Belongs to the BPG-independent phosphoglycerate mutase family.</text>
</comment>
<gene>
    <name evidence="1" type="primary">gpmI</name>
    <name type="ordered locus">SPAB_04601</name>
</gene>
<organism>
    <name type="scientific">Salmonella paratyphi B (strain ATCC BAA-1250 / SPB7)</name>
    <dbReference type="NCBI Taxonomy" id="1016998"/>
    <lineage>
        <taxon>Bacteria</taxon>
        <taxon>Pseudomonadati</taxon>
        <taxon>Pseudomonadota</taxon>
        <taxon>Gammaproteobacteria</taxon>
        <taxon>Enterobacterales</taxon>
        <taxon>Enterobacteriaceae</taxon>
        <taxon>Salmonella</taxon>
    </lineage>
</organism>
<protein>
    <recommendedName>
        <fullName evidence="1">2,3-bisphosphoglycerate-independent phosphoglycerate mutase</fullName>
        <shortName evidence="1">BPG-independent PGAM</shortName>
        <shortName evidence="1">Phosphoglyceromutase</shortName>
        <shortName evidence="1">iPGM</shortName>
        <ecNumber evidence="1">5.4.2.12</ecNumber>
    </recommendedName>
</protein>
<feature type="chain" id="PRO_1000084310" description="2,3-bisphosphoglycerate-independent phosphoglycerate mutase">
    <location>
        <begin position="1"/>
        <end position="514"/>
    </location>
</feature>
<feature type="active site" description="Phosphoserine intermediate" evidence="1">
    <location>
        <position position="64"/>
    </location>
</feature>
<feature type="binding site" evidence="1">
    <location>
        <position position="14"/>
    </location>
    <ligand>
        <name>Mn(2+)</name>
        <dbReference type="ChEBI" id="CHEBI:29035"/>
        <label>2</label>
    </ligand>
</feature>
<feature type="binding site" evidence="1">
    <location>
        <position position="64"/>
    </location>
    <ligand>
        <name>Mn(2+)</name>
        <dbReference type="ChEBI" id="CHEBI:29035"/>
        <label>2</label>
    </ligand>
</feature>
<feature type="binding site" evidence="1">
    <location>
        <position position="125"/>
    </location>
    <ligand>
        <name>substrate</name>
    </ligand>
</feature>
<feature type="binding site" evidence="1">
    <location>
        <begin position="155"/>
        <end position="156"/>
    </location>
    <ligand>
        <name>substrate</name>
    </ligand>
</feature>
<feature type="binding site" evidence="1">
    <location>
        <position position="187"/>
    </location>
    <ligand>
        <name>substrate</name>
    </ligand>
</feature>
<feature type="binding site" evidence="1">
    <location>
        <position position="193"/>
    </location>
    <ligand>
        <name>substrate</name>
    </ligand>
</feature>
<feature type="binding site" evidence="1">
    <location>
        <begin position="263"/>
        <end position="266"/>
    </location>
    <ligand>
        <name>substrate</name>
    </ligand>
</feature>
<feature type="binding site" evidence="1">
    <location>
        <position position="336"/>
    </location>
    <ligand>
        <name>substrate</name>
    </ligand>
</feature>
<feature type="binding site" evidence="1">
    <location>
        <position position="403"/>
    </location>
    <ligand>
        <name>Mn(2+)</name>
        <dbReference type="ChEBI" id="CHEBI:29035"/>
        <label>1</label>
    </ligand>
</feature>
<feature type="binding site" evidence="1">
    <location>
        <position position="407"/>
    </location>
    <ligand>
        <name>Mn(2+)</name>
        <dbReference type="ChEBI" id="CHEBI:29035"/>
        <label>1</label>
    </ligand>
</feature>
<feature type="binding site" evidence="1">
    <location>
        <position position="444"/>
    </location>
    <ligand>
        <name>Mn(2+)</name>
        <dbReference type="ChEBI" id="CHEBI:29035"/>
        <label>2</label>
    </ligand>
</feature>
<feature type="binding site" evidence="1">
    <location>
        <position position="445"/>
    </location>
    <ligand>
        <name>Mn(2+)</name>
        <dbReference type="ChEBI" id="CHEBI:29035"/>
        <label>2</label>
    </ligand>
</feature>
<feature type="binding site" evidence="1">
    <location>
        <position position="463"/>
    </location>
    <ligand>
        <name>Mn(2+)</name>
        <dbReference type="ChEBI" id="CHEBI:29035"/>
        <label>1</label>
    </ligand>
</feature>
<reference key="1">
    <citation type="submission" date="2007-11" db="EMBL/GenBank/DDBJ databases">
        <authorList>
            <consortium name="The Salmonella enterica serovar Paratyphi B Genome Sequencing Project"/>
            <person name="McClelland M."/>
            <person name="Sanderson E.K."/>
            <person name="Porwollik S."/>
            <person name="Spieth J."/>
            <person name="Clifton W.S."/>
            <person name="Fulton R."/>
            <person name="Cordes M."/>
            <person name="Wollam A."/>
            <person name="Shah N."/>
            <person name="Pepin K."/>
            <person name="Bhonagiri V."/>
            <person name="Nash W."/>
            <person name="Johnson M."/>
            <person name="Thiruvilangam P."/>
            <person name="Wilson R."/>
        </authorList>
    </citation>
    <scope>NUCLEOTIDE SEQUENCE [LARGE SCALE GENOMIC DNA]</scope>
    <source>
        <strain>ATCC BAA-1250 / SPB7</strain>
    </source>
</reference>
<sequence length="514" mass="56240">MSVSKKPMVLVILDGYGYREEQQDNAILNAKTPVMDALWAKRPHTLIDASGLEVGLPDRQMGNSEVGHVNLGAGRIVYQDLTRLDVEIKERTFFANPVLTNAVDQAKNAGKAVHIMGLLSAGGVHSHEDHIMAMVELAAERGAEKIYLHAFLDGRDTPPRSAEASLKKFEDKFAALGKGRVASIVGRYYAMDRDNRWDRVEKAYDLMTLAQGEFQADTAVAGLQAAYARDENDEFVKATVILAEGQADAAMEDGDTLIFMNFRADRAREITRAFVNADFDGFARKKVVNLNFVMLTEYAADIKTAVAYPPASLVNTFGEWMAKNDKTQLRISETEKYAHVTFFFNGGVEEPFAGEERILINSPKVATYDLQPEMSSAELTEKLVAAIESGKYDTIICNYPNGDMVGHTGVMEAAIKAVEALDNCIEQVTKAVESVGGQLLITADHGNAEQMRDPATGQAHTAHTNLPVPLIYVGEKNVKAVEGGKLSDIAPTMLSLMGMEIPQEMTGKPLFIVE</sequence>
<keyword id="KW-0324">Glycolysis</keyword>
<keyword id="KW-0413">Isomerase</keyword>
<keyword id="KW-0464">Manganese</keyword>
<keyword id="KW-0479">Metal-binding</keyword>
<evidence type="ECO:0000255" key="1">
    <source>
        <dbReference type="HAMAP-Rule" id="MF_01038"/>
    </source>
</evidence>
<proteinExistence type="inferred from homology"/>